<dbReference type="EC" id="5.4.99.12" evidence="1"/>
<dbReference type="EMBL" id="CP001321">
    <property type="protein sequence ID" value="ACL31784.1"/>
    <property type="molecule type" value="Genomic_DNA"/>
</dbReference>
<dbReference type="RefSeq" id="WP_010785880.1">
    <property type="nucleotide sequence ID" value="NC_011852.1"/>
</dbReference>
<dbReference type="SMR" id="B8F382"/>
<dbReference type="STRING" id="557723.HAPS_0080"/>
<dbReference type="KEGG" id="hap:HAPS_0080"/>
<dbReference type="HOGENOM" id="CLU_014673_0_2_6"/>
<dbReference type="Proteomes" id="UP000006743">
    <property type="component" value="Chromosome"/>
</dbReference>
<dbReference type="GO" id="GO:0003723">
    <property type="term" value="F:RNA binding"/>
    <property type="evidence" value="ECO:0007669"/>
    <property type="project" value="InterPro"/>
</dbReference>
<dbReference type="GO" id="GO:0160147">
    <property type="term" value="F:tRNA pseudouridine(38-40) synthase activity"/>
    <property type="evidence" value="ECO:0007669"/>
    <property type="project" value="UniProtKB-EC"/>
</dbReference>
<dbReference type="GO" id="GO:0031119">
    <property type="term" value="P:tRNA pseudouridine synthesis"/>
    <property type="evidence" value="ECO:0007669"/>
    <property type="project" value="UniProtKB-UniRule"/>
</dbReference>
<dbReference type="CDD" id="cd02570">
    <property type="entry name" value="PseudoU_synth_EcTruA"/>
    <property type="match status" value="1"/>
</dbReference>
<dbReference type="FunFam" id="3.30.70.580:FF:000001">
    <property type="entry name" value="tRNA pseudouridine synthase A"/>
    <property type="match status" value="1"/>
</dbReference>
<dbReference type="FunFam" id="3.30.70.660:FF:000001">
    <property type="entry name" value="tRNA pseudouridine synthase A"/>
    <property type="match status" value="1"/>
</dbReference>
<dbReference type="Gene3D" id="3.30.70.660">
    <property type="entry name" value="Pseudouridine synthase I, catalytic domain, C-terminal subdomain"/>
    <property type="match status" value="1"/>
</dbReference>
<dbReference type="Gene3D" id="3.30.70.580">
    <property type="entry name" value="Pseudouridine synthase I, catalytic domain, N-terminal subdomain"/>
    <property type="match status" value="1"/>
</dbReference>
<dbReference type="HAMAP" id="MF_00171">
    <property type="entry name" value="TruA"/>
    <property type="match status" value="1"/>
</dbReference>
<dbReference type="InterPro" id="IPR020103">
    <property type="entry name" value="PsdUridine_synth_cat_dom_sf"/>
</dbReference>
<dbReference type="InterPro" id="IPR001406">
    <property type="entry name" value="PsdUridine_synth_TruA"/>
</dbReference>
<dbReference type="InterPro" id="IPR020097">
    <property type="entry name" value="PsdUridine_synth_TruA_a/b_dom"/>
</dbReference>
<dbReference type="InterPro" id="IPR020095">
    <property type="entry name" value="PsdUridine_synth_TruA_C"/>
</dbReference>
<dbReference type="InterPro" id="IPR020094">
    <property type="entry name" value="TruA/RsuA/RluB/E/F_N"/>
</dbReference>
<dbReference type="NCBIfam" id="TIGR00071">
    <property type="entry name" value="hisT_truA"/>
    <property type="match status" value="1"/>
</dbReference>
<dbReference type="PANTHER" id="PTHR11142">
    <property type="entry name" value="PSEUDOURIDYLATE SYNTHASE"/>
    <property type="match status" value="1"/>
</dbReference>
<dbReference type="PANTHER" id="PTHR11142:SF0">
    <property type="entry name" value="TRNA PSEUDOURIDINE SYNTHASE-LIKE 1"/>
    <property type="match status" value="1"/>
</dbReference>
<dbReference type="Pfam" id="PF01416">
    <property type="entry name" value="PseudoU_synth_1"/>
    <property type="match status" value="2"/>
</dbReference>
<dbReference type="PIRSF" id="PIRSF001430">
    <property type="entry name" value="tRNA_psdUrid_synth"/>
    <property type="match status" value="1"/>
</dbReference>
<dbReference type="SUPFAM" id="SSF55120">
    <property type="entry name" value="Pseudouridine synthase"/>
    <property type="match status" value="1"/>
</dbReference>
<protein>
    <recommendedName>
        <fullName evidence="1">tRNA pseudouridine synthase A</fullName>
        <ecNumber evidence="1">5.4.99.12</ecNumber>
    </recommendedName>
    <alternativeName>
        <fullName evidence="1">tRNA pseudouridine(38-40) synthase</fullName>
    </alternativeName>
    <alternativeName>
        <fullName evidence="1">tRNA pseudouridylate synthase I</fullName>
    </alternativeName>
    <alternativeName>
        <fullName evidence="1">tRNA-uridine isomerase I</fullName>
    </alternativeName>
</protein>
<organism>
    <name type="scientific">Glaesserella parasuis serovar 5 (strain SH0165)</name>
    <name type="common">Haemophilus parasuis</name>
    <dbReference type="NCBI Taxonomy" id="557723"/>
    <lineage>
        <taxon>Bacteria</taxon>
        <taxon>Pseudomonadati</taxon>
        <taxon>Pseudomonadota</taxon>
        <taxon>Gammaproteobacteria</taxon>
        <taxon>Pasteurellales</taxon>
        <taxon>Pasteurellaceae</taxon>
        <taxon>Glaesserella</taxon>
    </lineage>
</organism>
<sequence>MKIALGIEYDGCRYCGWQRQQYVDSVQQRLEEALSVIANSSCEVFCAGRTDAGVHATGQVVHFDTDVNRPMQSWCLGTNAHLPEDIVVKWAIGVSDDFHARFSALARRYRYVIYNNKLRSAILPKGISHYHYSLDHEKMHEAGQFLLGENDFSSFRAAKCQSHTPWRNVHHLIVSRHQDYIILDIQANAFVHHMVRNIVGSLIEVGRGDKPVEWIKWLLEKRDRTLAAPTAKAEGLYLVEVIYPEKFSIPQMPLGPLFYYGK</sequence>
<accession>B8F382</accession>
<reference key="1">
    <citation type="journal article" date="2009" name="J. Bacteriol.">
        <title>Complete genome sequence of Haemophilus parasuis SH0165.</title>
        <authorList>
            <person name="Yue M."/>
            <person name="Yang F."/>
            <person name="Yang J."/>
            <person name="Bei W."/>
            <person name="Cai X."/>
            <person name="Chen L."/>
            <person name="Dong J."/>
            <person name="Zhou R."/>
            <person name="Jin M."/>
            <person name="Jin Q."/>
            <person name="Chen H."/>
        </authorList>
    </citation>
    <scope>NUCLEOTIDE SEQUENCE [LARGE SCALE GENOMIC DNA]</scope>
    <source>
        <strain>SH0165</strain>
    </source>
</reference>
<evidence type="ECO:0000255" key="1">
    <source>
        <dbReference type="HAMAP-Rule" id="MF_00171"/>
    </source>
</evidence>
<feature type="chain" id="PRO_1000194559" description="tRNA pseudouridine synthase A">
    <location>
        <begin position="1"/>
        <end position="262"/>
    </location>
</feature>
<feature type="active site" description="Nucleophile" evidence="1">
    <location>
        <position position="51"/>
    </location>
</feature>
<feature type="binding site" evidence="1">
    <location>
        <position position="109"/>
    </location>
    <ligand>
        <name>substrate</name>
    </ligand>
</feature>
<gene>
    <name evidence="1" type="primary">truA</name>
    <name type="ordered locus">HAPS_0080</name>
</gene>
<proteinExistence type="inferred from homology"/>
<keyword id="KW-0413">Isomerase</keyword>
<keyword id="KW-1185">Reference proteome</keyword>
<keyword id="KW-0819">tRNA processing</keyword>
<comment type="function">
    <text evidence="1">Formation of pseudouridine at positions 38, 39 and 40 in the anticodon stem and loop of transfer RNAs.</text>
</comment>
<comment type="catalytic activity">
    <reaction evidence="1">
        <text>uridine(38/39/40) in tRNA = pseudouridine(38/39/40) in tRNA</text>
        <dbReference type="Rhea" id="RHEA:22376"/>
        <dbReference type="Rhea" id="RHEA-COMP:10085"/>
        <dbReference type="Rhea" id="RHEA-COMP:10087"/>
        <dbReference type="ChEBI" id="CHEBI:65314"/>
        <dbReference type="ChEBI" id="CHEBI:65315"/>
        <dbReference type="EC" id="5.4.99.12"/>
    </reaction>
</comment>
<comment type="subunit">
    <text evidence="1">Homodimer.</text>
</comment>
<comment type="similarity">
    <text evidence="1">Belongs to the tRNA pseudouridine synthase TruA family.</text>
</comment>
<name>TRUA_GLAP5</name>